<evidence type="ECO:0000269" key="1">
    <source>
    </source>
</evidence>
<evidence type="ECO:0000269" key="2">
    <source>
    </source>
</evidence>
<evidence type="ECO:0000269" key="3">
    <source>
    </source>
</evidence>
<evidence type="ECO:0000305" key="4"/>
<evidence type="ECO:0007829" key="5">
    <source>
        <dbReference type="PDB" id="2VID"/>
    </source>
</evidence>
<evidence type="ECO:0007829" key="6">
    <source>
        <dbReference type="PDB" id="6YV5"/>
    </source>
</evidence>
<evidence type="ECO:0007829" key="7">
    <source>
        <dbReference type="PDB" id="6YV6"/>
    </source>
</evidence>
<gene>
    <name type="primary">splB</name>
    <name type="ordered locus">SAOUHSC_01941</name>
</gene>
<dbReference type="EC" id="3.4.21.-"/>
<dbReference type="EMBL" id="AF271715">
    <property type="protein sequence ID" value="AAF97926.1"/>
    <property type="molecule type" value="Genomic_DNA"/>
</dbReference>
<dbReference type="EMBL" id="CP000253">
    <property type="protein sequence ID" value="ABD31003.1"/>
    <property type="molecule type" value="Genomic_DNA"/>
</dbReference>
<dbReference type="RefSeq" id="WP_001039447.1">
    <property type="nucleotide sequence ID" value="NZ_LS483365.1"/>
</dbReference>
<dbReference type="RefSeq" id="YP_500441.1">
    <property type="nucleotide sequence ID" value="NC_007795.1"/>
</dbReference>
<dbReference type="PDB" id="2VID">
    <property type="method" value="X-ray"/>
    <property type="resolution" value="1.80 A"/>
    <property type="chains" value="A/B=37-240"/>
</dbReference>
<dbReference type="PDB" id="4K1S">
    <property type="method" value="X-ray"/>
    <property type="resolution" value="1.96 A"/>
    <property type="chains" value="A/B=37-240"/>
</dbReference>
<dbReference type="PDB" id="4K1T">
    <property type="method" value="X-ray"/>
    <property type="resolution" value="1.60 A"/>
    <property type="chains" value="A/B/C=37-240"/>
</dbReference>
<dbReference type="PDB" id="6YV5">
    <property type="method" value="X-ray"/>
    <property type="resolution" value="1.10 A"/>
    <property type="chains" value="A=37-240"/>
</dbReference>
<dbReference type="PDB" id="6YV6">
    <property type="method" value="X-ray"/>
    <property type="resolution" value="1.36 A"/>
    <property type="chains" value="A=37-240"/>
</dbReference>
<dbReference type="PDBsum" id="2VID"/>
<dbReference type="PDBsum" id="4K1S"/>
<dbReference type="PDBsum" id="4K1T"/>
<dbReference type="PDBsum" id="6YV5"/>
<dbReference type="PDBsum" id="6YV6"/>
<dbReference type="SMR" id="Q2FXC3"/>
<dbReference type="STRING" id="93061.SAOUHSC_01941"/>
<dbReference type="MEROPS" id="S01.282"/>
<dbReference type="PaxDb" id="1280-SAXN108_1845"/>
<dbReference type="GeneID" id="3921024"/>
<dbReference type="KEGG" id="sao:SAOUHSC_01941"/>
<dbReference type="PATRIC" id="fig|93061.5.peg.1766"/>
<dbReference type="eggNOG" id="COG3591">
    <property type="taxonomic scope" value="Bacteria"/>
</dbReference>
<dbReference type="HOGENOM" id="CLU_073589_2_0_9"/>
<dbReference type="OrthoDB" id="191045at2"/>
<dbReference type="EvolutionaryTrace" id="Q2FXC3"/>
<dbReference type="PHI-base" id="PHI:11222"/>
<dbReference type="PRO" id="PR:Q2FXC3"/>
<dbReference type="Proteomes" id="UP000008816">
    <property type="component" value="Chromosome"/>
</dbReference>
<dbReference type="GO" id="GO:0005576">
    <property type="term" value="C:extracellular region"/>
    <property type="evidence" value="ECO:0007669"/>
    <property type="project" value="UniProtKB-SubCell"/>
</dbReference>
<dbReference type="GO" id="GO:0004252">
    <property type="term" value="F:serine-type endopeptidase activity"/>
    <property type="evidence" value="ECO:0007669"/>
    <property type="project" value="InterPro"/>
</dbReference>
<dbReference type="GO" id="GO:0006508">
    <property type="term" value="P:proteolysis"/>
    <property type="evidence" value="ECO:0007669"/>
    <property type="project" value="UniProtKB-KW"/>
</dbReference>
<dbReference type="Gene3D" id="2.40.10.10">
    <property type="entry name" value="Trypsin-like serine proteases"/>
    <property type="match status" value="2"/>
</dbReference>
<dbReference type="InterPro" id="IPR009003">
    <property type="entry name" value="Peptidase_S1_PA"/>
</dbReference>
<dbReference type="InterPro" id="IPR043504">
    <property type="entry name" value="Peptidase_S1_PA_chymotrypsin"/>
</dbReference>
<dbReference type="InterPro" id="IPR008256">
    <property type="entry name" value="Peptidase_S1B"/>
</dbReference>
<dbReference type="InterPro" id="IPR008353">
    <property type="entry name" value="Peptidase_S1B_tx"/>
</dbReference>
<dbReference type="InterPro" id="IPR001254">
    <property type="entry name" value="Trypsin_dom"/>
</dbReference>
<dbReference type="InterPro" id="IPR028301">
    <property type="entry name" value="V8_his_AS"/>
</dbReference>
<dbReference type="PANTHER" id="PTHR43019:SF23">
    <property type="entry name" value="PROTEASE DO-LIKE 5, CHLOROPLASTIC"/>
    <property type="match status" value="1"/>
</dbReference>
<dbReference type="PANTHER" id="PTHR43019">
    <property type="entry name" value="SERINE ENDOPROTEASE DEGS"/>
    <property type="match status" value="1"/>
</dbReference>
<dbReference type="Pfam" id="PF00089">
    <property type="entry name" value="Trypsin"/>
    <property type="match status" value="1"/>
</dbReference>
<dbReference type="PRINTS" id="PR01774">
    <property type="entry name" value="EXFOLTOXIN"/>
</dbReference>
<dbReference type="PRINTS" id="PR00839">
    <property type="entry name" value="V8PROTEASE"/>
</dbReference>
<dbReference type="SUPFAM" id="SSF50494">
    <property type="entry name" value="Trypsin-like serine proteases"/>
    <property type="match status" value="1"/>
</dbReference>
<dbReference type="PROSITE" id="PS00672">
    <property type="entry name" value="V8_HIS"/>
    <property type="match status" value="1"/>
</dbReference>
<organism>
    <name type="scientific">Staphylococcus aureus (strain NCTC 8325 / PS 47)</name>
    <dbReference type="NCBI Taxonomy" id="93061"/>
    <lineage>
        <taxon>Bacteria</taxon>
        <taxon>Bacillati</taxon>
        <taxon>Bacillota</taxon>
        <taxon>Bacilli</taxon>
        <taxon>Bacillales</taxon>
        <taxon>Staphylococcaceae</taxon>
        <taxon>Staphylococcus</taxon>
    </lineage>
</organism>
<name>SPLB_STAA8</name>
<comment type="function">
    <text evidence="3">Serine protease that cleaves specifically after the sequence Trp-Glu-Leu-Gln.</text>
</comment>
<comment type="activity regulation">
    <text evidence="2">Maintained latent until the signal peptide is removed by signal peptidase.</text>
</comment>
<comment type="biophysicochemical properties">
    <phDependence>
        <text evidence="3">Optimum pH is 8.0-8.5.</text>
    </phDependence>
</comment>
<comment type="subcellular location">
    <subcellularLocation>
        <location evidence="1 2">Secreted</location>
    </subcellularLocation>
</comment>
<comment type="developmental stage">
    <text evidence="1">Maximally expressed during early stationary phase.</text>
</comment>
<comment type="induction">
    <text evidence="1">Positively regulated by agr (accessory gene regulator).</text>
</comment>
<comment type="similarity">
    <text evidence="4">Belongs to the peptidase S1B family.</text>
</comment>
<proteinExistence type="evidence at protein level"/>
<reference key="1">
    <citation type="journal article" date="2001" name="Infect. Immun.">
        <title>Molecular characterization of a novel Staphylococcus aureus serine protease operon.</title>
        <authorList>
            <person name="Reed S.B."/>
            <person name="Wesson C.A."/>
            <person name="Liou L.E."/>
            <person name="Trumble W.R."/>
            <person name="Schlievert P.M."/>
            <person name="Bohach G.A."/>
            <person name="Bayles K.W."/>
        </authorList>
    </citation>
    <scope>NUCLEOTIDE SEQUENCE [GENOMIC DNA]</scope>
    <scope>PROTEIN SEQUENCE OF 37-57</scope>
    <scope>PROTEASE ACTIVITY</scope>
    <scope>SUBCELLULAR LOCATION</scope>
    <scope>DEVELOPMENTAL STAGE</scope>
    <scope>INDUCTION</scope>
</reference>
<reference key="2">
    <citation type="book" date="2006" name="Gram positive pathogens, 2nd edition">
        <title>The Staphylococcus aureus NCTC 8325 genome.</title>
        <editorList>
            <person name="Fischetti V."/>
            <person name="Novick R."/>
            <person name="Ferretti J."/>
            <person name="Portnoy D."/>
            <person name="Rood J."/>
        </editorList>
        <authorList>
            <person name="Gillaspy A.F."/>
            <person name="Worrell V."/>
            <person name="Orvis J."/>
            <person name="Roe B.A."/>
            <person name="Dyer D.W."/>
            <person name="Iandolo J.J."/>
        </authorList>
    </citation>
    <scope>NUCLEOTIDE SEQUENCE [LARGE SCALE GENOMIC DNA]</scope>
    <source>
        <strain>NCTC 8325 / PS 47</strain>
    </source>
</reference>
<reference key="3">
    <citation type="journal article" date="2006" name="J. Mol. Biol.">
        <title>Functional and structural characterization of Spl proteases from Staphylococcus aureus.</title>
        <authorList>
            <person name="Popowicz G.M."/>
            <person name="Dubin G."/>
            <person name="Stec-Niemczyk J."/>
            <person name="Czarny A."/>
            <person name="Dubin A."/>
            <person name="Potempa J."/>
            <person name="Holak T.A."/>
        </authorList>
    </citation>
    <scope>PROTEIN SEQUENCE OF 37-41</scope>
    <scope>SUBCELLULAR LOCATION</scope>
    <scope>ACTIVITY REGULATION</scope>
</reference>
<reference key="4">
    <citation type="journal article" date="2008" name="J. Mol. Biol.">
        <title>Enzymatic activity of the Staphylococcus aureus SplB serine protease is induced by substrates containing the sequence Trp-Glu-Leu-Gln.</title>
        <authorList>
            <person name="Dubin G."/>
            <person name="Stec-Niemczyk J."/>
            <person name="Kisielewska M."/>
            <person name="Pustelny K."/>
            <person name="Popowicz G.M."/>
            <person name="Bista M."/>
            <person name="Kantyka T."/>
            <person name="Boulware K.T."/>
            <person name="Stennicke H.R."/>
            <person name="Czarna A."/>
            <person name="Phopaisarn M."/>
            <person name="Daugherty P.S."/>
            <person name="Thoegersen I.B."/>
            <person name="Enghild J.J."/>
            <person name="Thornberry N."/>
            <person name="Dubin A."/>
            <person name="Potempa J."/>
        </authorList>
    </citation>
    <scope>X-RAY CRYSTALLOGRAPHY (1.80 ANGSTROMS) OF 37-240</scope>
    <scope>PROTEIN SEQUENCE OF N-TERMINUS</scope>
    <scope>IDENTIFICATION BY MASS SPECTROMETRY</scope>
    <scope>FUNCTION</scope>
    <scope>BIOPHYSICOCHEMICAL PROPERTIES</scope>
    <scope>MUTAGENESIS OF SER-193</scope>
    <scope>ACTIVE SITE</scope>
</reference>
<sequence>MNKNVVIKSLAALTILTSVTGIGTTLVEEVQQTAKAENNVTKVKDTNIFPYTGVVAFKSATGFVVGKNTILTNKHVSKNYKVGDRITAHPNSDKGNGGIYSIKKIINYPGKEDVSVIQVEERAIERGPKGFNFNDNVTPFKYAAGAKAGERIKVIGYPHPYKNKYVLYESTGPVMSVEGSSIVYSAHTESGNSGSPVLNSNNELVGIHFASDVKNDDNRNAYGVYFTPEIKKFIAENIDK</sequence>
<keyword id="KW-0002">3D-structure</keyword>
<keyword id="KW-0903">Direct protein sequencing</keyword>
<keyword id="KW-0378">Hydrolase</keyword>
<keyword id="KW-0645">Protease</keyword>
<keyword id="KW-1185">Reference proteome</keyword>
<keyword id="KW-0964">Secreted</keyword>
<keyword id="KW-0720">Serine protease</keyword>
<keyword id="KW-0732">Signal</keyword>
<feature type="signal peptide" evidence="1 2 3">
    <location>
        <begin position="1"/>
        <end position="36"/>
    </location>
</feature>
<feature type="chain" id="PRO_0000359547" description="Serine protease SplB">
    <location>
        <begin position="37"/>
        <end position="240"/>
    </location>
</feature>
<feature type="active site" description="Charge relay system" evidence="3">
    <location>
        <position position="75"/>
    </location>
</feature>
<feature type="active site" description="Charge relay system" evidence="3">
    <location>
        <position position="113"/>
    </location>
</feature>
<feature type="active site" description="Charge relay system" evidence="3">
    <location>
        <position position="193"/>
    </location>
</feature>
<feature type="mutagenesis site" description="Loss of activity." evidence="3">
    <original>S</original>
    <variation>A</variation>
    <location>
        <position position="193"/>
    </location>
</feature>
<feature type="strand" evidence="6">
    <location>
        <begin position="40"/>
        <end position="42"/>
    </location>
</feature>
<feature type="helix" evidence="6">
    <location>
        <begin position="51"/>
        <end position="53"/>
    </location>
</feature>
<feature type="strand" evidence="6">
    <location>
        <begin position="54"/>
        <end position="56"/>
    </location>
</feature>
<feature type="strand" evidence="6">
    <location>
        <begin position="58"/>
        <end position="66"/>
    </location>
</feature>
<feature type="strand" evidence="6">
    <location>
        <begin position="69"/>
        <end position="72"/>
    </location>
</feature>
<feature type="helix" evidence="6">
    <location>
        <begin position="74"/>
        <end position="77"/>
    </location>
</feature>
<feature type="strand" evidence="6">
    <location>
        <begin position="85"/>
        <end position="89"/>
    </location>
</feature>
<feature type="strand" evidence="5">
    <location>
        <begin position="92"/>
        <end position="94"/>
    </location>
</feature>
<feature type="strand" evidence="6">
    <location>
        <begin position="99"/>
        <end position="107"/>
    </location>
</feature>
<feature type="strand" evidence="6">
    <location>
        <begin position="109"/>
        <end position="112"/>
    </location>
</feature>
<feature type="strand" evidence="6">
    <location>
        <begin position="115"/>
        <end position="119"/>
    </location>
</feature>
<feature type="strand" evidence="6">
    <location>
        <begin position="121"/>
        <end position="127"/>
    </location>
</feature>
<feature type="strand" evidence="6">
    <location>
        <begin position="130"/>
        <end position="132"/>
    </location>
</feature>
<feature type="helix" evidence="6">
    <location>
        <begin position="133"/>
        <end position="136"/>
    </location>
</feature>
<feature type="strand" evidence="6">
    <location>
        <begin position="151"/>
        <end position="156"/>
    </location>
</feature>
<feature type="helix" evidence="7">
    <location>
        <begin position="160"/>
        <end position="163"/>
    </location>
</feature>
<feature type="strand" evidence="6">
    <location>
        <begin position="168"/>
        <end position="178"/>
    </location>
</feature>
<feature type="strand" evidence="6">
    <location>
        <begin position="181"/>
        <end position="184"/>
    </location>
</feature>
<feature type="helix" evidence="6">
    <location>
        <begin position="190"/>
        <end position="192"/>
    </location>
</feature>
<feature type="strand" evidence="6">
    <location>
        <begin position="196"/>
        <end position="198"/>
    </location>
</feature>
<feature type="strand" evidence="6">
    <location>
        <begin position="204"/>
        <end position="211"/>
    </location>
</feature>
<feature type="strand" evidence="6">
    <location>
        <begin position="215"/>
        <end position="218"/>
    </location>
</feature>
<feature type="strand" evidence="6">
    <location>
        <begin position="221"/>
        <end position="224"/>
    </location>
</feature>
<feature type="helix" evidence="6">
    <location>
        <begin position="228"/>
        <end position="236"/>
    </location>
</feature>
<accession>Q2FXC3</accession>
<accession>Q9KH50</accession>
<protein>
    <recommendedName>
        <fullName>Serine protease SplB</fullName>
        <ecNumber>3.4.21.-</ecNumber>
    </recommendedName>
</protein>